<sequence>MAALIVSRLARRGWLWKLPLATRREFWSRSRKEKEPVVAETVEEVKKEPVLVCPPLRSRAYTPPSDLQSRLESHIKEVLGSSLPNNWQDISLDDGHMKFRLLAGLADGLGHAVPNSRLHQMCRVRDVLDFYNVPVQDKSKFDELVASNLPPNLKISWSY</sequence>
<feature type="chain" id="PRO_0000261660" description="Large ribosomal subunit protein mL50">
    <location>
        <begin position="1"/>
        <end position="159"/>
    </location>
</feature>
<feature type="sequence conflict" description="In Ref. 2; AAH21318." evidence="2" ref="2">
    <original>I</original>
    <variation>V</variation>
    <location>
        <position position="5"/>
    </location>
</feature>
<feature type="sequence conflict" description="In Ref. 2; AAH21318." evidence="2" ref="2">
    <original>L</original>
    <variation>F</variation>
    <location>
        <position position="9"/>
    </location>
</feature>
<keyword id="KW-0496">Mitochondrion</keyword>
<keyword id="KW-1185">Reference proteome</keyword>
<keyword id="KW-0687">Ribonucleoprotein</keyword>
<keyword id="KW-0689">Ribosomal protein</keyword>
<reference key="1">
    <citation type="journal article" date="2005" name="Science">
        <title>The transcriptional landscape of the mammalian genome.</title>
        <authorList>
            <person name="Carninci P."/>
            <person name="Kasukawa T."/>
            <person name="Katayama S."/>
            <person name="Gough J."/>
            <person name="Frith M.C."/>
            <person name="Maeda N."/>
            <person name="Oyama R."/>
            <person name="Ravasi T."/>
            <person name="Lenhard B."/>
            <person name="Wells C."/>
            <person name="Kodzius R."/>
            <person name="Shimokawa K."/>
            <person name="Bajic V.B."/>
            <person name="Brenner S.E."/>
            <person name="Batalov S."/>
            <person name="Forrest A.R."/>
            <person name="Zavolan M."/>
            <person name="Davis M.J."/>
            <person name="Wilming L.G."/>
            <person name="Aidinis V."/>
            <person name="Allen J.E."/>
            <person name="Ambesi-Impiombato A."/>
            <person name="Apweiler R."/>
            <person name="Aturaliya R.N."/>
            <person name="Bailey T.L."/>
            <person name="Bansal M."/>
            <person name="Baxter L."/>
            <person name="Beisel K.W."/>
            <person name="Bersano T."/>
            <person name="Bono H."/>
            <person name="Chalk A.M."/>
            <person name="Chiu K.P."/>
            <person name="Choudhary V."/>
            <person name="Christoffels A."/>
            <person name="Clutterbuck D.R."/>
            <person name="Crowe M.L."/>
            <person name="Dalla E."/>
            <person name="Dalrymple B.P."/>
            <person name="de Bono B."/>
            <person name="Della Gatta G."/>
            <person name="di Bernardo D."/>
            <person name="Down T."/>
            <person name="Engstrom P."/>
            <person name="Fagiolini M."/>
            <person name="Faulkner G."/>
            <person name="Fletcher C.F."/>
            <person name="Fukushima T."/>
            <person name="Furuno M."/>
            <person name="Futaki S."/>
            <person name="Gariboldi M."/>
            <person name="Georgii-Hemming P."/>
            <person name="Gingeras T.R."/>
            <person name="Gojobori T."/>
            <person name="Green R.E."/>
            <person name="Gustincich S."/>
            <person name="Harbers M."/>
            <person name="Hayashi Y."/>
            <person name="Hensch T.K."/>
            <person name="Hirokawa N."/>
            <person name="Hill D."/>
            <person name="Huminiecki L."/>
            <person name="Iacono M."/>
            <person name="Ikeo K."/>
            <person name="Iwama A."/>
            <person name="Ishikawa T."/>
            <person name="Jakt M."/>
            <person name="Kanapin A."/>
            <person name="Katoh M."/>
            <person name="Kawasawa Y."/>
            <person name="Kelso J."/>
            <person name="Kitamura H."/>
            <person name="Kitano H."/>
            <person name="Kollias G."/>
            <person name="Krishnan S.P."/>
            <person name="Kruger A."/>
            <person name="Kummerfeld S.K."/>
            <person name="Kurochkin I.V."/>
            <person name="Lareau L.F."/>
            <person name="Lazarevic D."/>
            <person name="Lipovich L."/>
            <person name="Liu J."/>
            <person name="Liuni S."/>
            <person name="McWilliam S."/>
            <person name="Madan Babu M."/>
            <person name="Madera M."/>
            <person name="Marchionni L."/>
            <person name="Matsuda H."/>
            <person name="Matsuzawa S."/>
            <person name="Miki H."/>
            <person name="Mignone F."/>
            <person name="Miyake S."/>
            <person name="Morris K."/>
            <person name="Mottagui-Tabar S."/>
            <person name="Mulder N."/>
            <person name="Nakano N."/>
            <person name="Nakauchi H."/>
            <person name="Ng P."/>
            <person name="Nilsson R."/>
            <person name="Nishiguchi S."/>
            <person name="Nishikawa S."/>
            <person name="Nori F."/>
            <person name="Ohara O."/>
            <person name="Okazaki Y."/>
            <person name="Orlando V."/>
            <person name="Pang K.C."/>
            <person name="Pavan W.J."/>
            <person name="Pavesi G."/>
            <person name="Pesole G."/>
            <person name="Petrovsky N."/>
            <person name="Piazza S."/>
            <person name="Reed J."/>
            <person name="Reid J.F."/>
            <person name="Ring B.Z."/>
            <person name="Ringwald M."/>
            <person name="Rost B."/>
            <person name="Ruan Y."/>
            <person name="Salzberg S.L."/>
            <person name="Sandelin A."/>
            <person name="Schneider C."/>
            <person name="Schoenbach C."/>
            <person name="Sekiguchi K."/>
            <person name="Semple C.A."/>
            <person name="Seno S."/>
            <person name="Sessa L."/>
            <person name="Sheng Y."/>
            <person name="Shibata Y."/>
            <person name="Shimada H."/>
            <person name="Shimada K."/>
            <person name="Silva D."/>
            <person name="Sinclair B."/>
            <person name="Sperling S."/>
            <person name="Stupka E."/>
            <person name="Sugiura K."/>
            <person name="Sultana R."/>
            <person name="Takenaka Y."/>
            <person name="Taki K."/>
            <person name="Tammoja K."/>
            <person name="Tan S.L."/>
            <person name="Tang S."/>
            <person name="Taylor M.S."/>
            <person name="Tegner J."/>
            <person name="Teichmann S.A."/>
            <person name="Ueda H.R."/>
            <person name="van Nimwegen E."/>
            <person name="Verardo R."/>
            <person name="Wei C.L."/>
            <person name="Yagi K."/>
            <person name="Yamanishi H."/>
            <person name="Zabarovsky E."/>
            <person name="Zhu S."/>
            <person name="Zimmer A."/>
            <person name="Hide W."/>
            <person name="Bult C."/>
            <person name="Grimmond S.M."/>
            <person name="Teasdale R.D."/>
            <person name="Liu E.T."/>
            <person name="Brusic V."/>
            <person name="Quackenbush J."/>
            <person name="Wahlestedt C."/>
            <person name="Mattick J.S."/>
            <person name="Hume D.A."/>
            <person name="Kai C."/>
            <person name="Sasaki D."/>
            <person name="Tomaru Y."/>
            <person name="Fukuda S."/>
            <person name="Kanamori-Katayama M."/>
            <person name="Suzuki M."/>
            <person name="Aoki J."/>
            <person name="Arakawa T."/>
            <person name="Iida J."/>
            <person name="Imamura K."/>
            <person name="Itoh M."/>
            <person name="Kato T."/>
            <person name="Kawaji H."/>
            <person name="Kawagashira N."/>
            <person name="Kawashima T."/>
            <person name="Kojima M."/>
            <person name="Kondo S."/>
            <person name="Konno H."/>
            <person name="Nakano K."/>
            <person name="Ninomiya N."/>
            <person name="Nishio T."/>
            <person name="Okada M."/>
            <person name="Plessy C."/>
            <person name="Shibata K."/>
            <person name="Shiraki T."/>
            <person name="Suzuki S."/>
            <person name="Tagami M."/>
            <person name="Waki K."/>
            <person name="Watahiki A."/>
            <person name="Okamura-Oho Y."/>
            <person name="Suzuki H."/>
            <person name="Kawai J."/>
            <person name="Hayashizaki Y."/>
        </authorList>
    </citation>
    <scope>NUCLEOTIDE SEQUENCE [LARGE SCALE MRNA]</scope>
    <source>
        <strain>C57BL/6J</strain>
        <tissue>Embryo</tissue>
        <tissue>Forelimb</tissue>
        <tissue>Kidney</tissue>
        <tissue>Pancreas</tissue>
    </source>
</reference>
<reference key="2">
    <citation type="journal article" date="2004" name="Genome Res.">
        <title>The status, quality, and expansion of the NIH full-length cDNA project: the Mammalian Gene Collection (MGC).</title>
        <authorList>
            <consortium name="The MGC Project Team"/>
        </authorList>
    </citation>
    <scope>NUCLEOTIDE SEQUENCE [LARGE SCALE MRNA]</scope>
    <source>
        <strain>Czech II</strain>
        <tissue>Mammary tumor</tissue>
    </source>
</reference>
<reference key="3">
    <citation type="journal article" date="2010" name="Cell">
        <title>A tissue-specific atlas of mouse protein phosphorylation and expression.</title>
        <authorList>
            <person name="Huttlin E.L."/>
            <person name="Jedrychowski M.P."/>
            <person name="Elias J.E."/>
            <person name="Goswami T."/>
            <person name="Rad R."/>
            <person name="Beausoleil S.A."/>
            <person name="Villen J."/>
            <person name="Haas W."/>
            <person name="Sowa M.E."/>
            <person name="Gygi S.P."/>
        </authorList>
    </citation>
    <scope>IDENTIFICATION BY MASS SPECTROMETRY [LARGE SCALE ANALYSIS]</scope>
    <source>
        <tissue>Brain</tissue>
        <tissue>Brown adipose tissue</tissue>
        <tissue>Heart</tissue>
        <tissue>Kidney</tissue>
        <tissue>Liver</tissue>
        <tissue>Testis</tissue>
    </source>
</reference>
<proteinExistence type="evidence at protein level"/>
<organism>
    <name type="scientific">Mus musculus</name>
    <name type="common">Mouse</name>
    <dbReference type="NCBI Taxonomy" id="10090"/>
    <lineage>
        <taxon>Eukaryota</taxon>
        <taxon>Metazoa</taxon>
        <taxon>Chordata</taxon>
        <taxon>Craniata</taxon>
        <taxon>Vertebrata</taxon>
        <taxon>Euteleostomi</taxon>
        <taxon>Mammalia</taxon>
        <taxon>Eutheria</taxon>
        <taxon>Euarchontoglires</taxon>
        <taxon>Glires</taxon>
        <taxon>Rodentia</taxon>
        <taxon>Myomorpha</taxon>
        <taxon>Muroidea</taxon>
        <taxon>Muridae</taxon>
        <taxon>Murinae</taxon>
        <taxon>Mus</taxon>
        <taxon>Mus</taxon>
    </lineage>
</organism>
<dbReference type="EMBL" id="AK002646">
    <property type="protein sequence ID" value="BAB22257.1"/>
    <property type="molecule type" value="mRNA"/>
</dbReference>
<dbReference type="EMBL" id="AK002686">
    <property type="protein sequence ID" value="BAB22283.1"/>
    <property type="molecule type" value="mRNA"/>
</dbReference>
<dbReference type="EMBL" id="AK007405">
    <property type="protein sequence ID" value="BAB25017.1"/>
    <property type="molecule type" value="mRNA"/>
</dbReference>
<dbReference type="EMBL" id="AK031229">
    <property type="protein sequence ID" value="BAC27309.1"/>
    <property type="molecule type" value="mRNA"/>
</dbReference>
<dbReference type="EMBL" id="AK049421">
    <property type="protein sequence ID" value="BAC33745.1"/>
    <property type="molecule type" value="mRNA"/>
</dbReference>
<dbReference type="EMBL" id="AK075787">
    <property type="protein sequence ID" value="BAC35958.1"/>
    <property type="molecule type" value="mRNA"/>
</dbReference>
<dbReference type="EMBL" id="BC021318">
    <property type="protein sequence ID" value="AAH21318.1"/>
    <property type="molecule type" value="mRNA"/>
</dbReference>
<dbReference type="CCDS" id="CCDS18174.1"/>
<dbReference type="RefSeq" id="NP_848718.1">
    <property type="nucleotide sequence ID" value="NM_178603.4"/>
</dbReference>
<dbReference type="SMR" id="Q8VDT9"/>
<dbReference type="BioGRID" id="205724">
    <property type="interactions" value="13"/>
</dbReference>
<dbReference type="ComplexPortal" id="CPX-5302">
    <property type="entry name" value="39S mitochondrial large ribosomal subunit"/>
</dbReference>
<dbReference type="FunCoup" id="Q8VDT9">
    <property type="interactions" value="1142"/>
</dbReference>
<dbReference type="STRING" id="10090.ENSMUSP00000062476"/>
<dbReference type="PhosphoSitePlus" id="Q8VDT9"/>
<dbReference type="PaxDb" id="10090-ENSMUSP00000062476"/>
<dbReference type="PeptideAtlas" id="Q8VDT9"/>
<dbReference type="ProteomicsDB" id="301606"/>
<dbReference type="Pumba" id="Q8VDT9"/>
<dbReference type="Antibodypedia" id="14646">
    <property type="antibodies" value="134 antibodies from 24 providers"/>
</dbReference>
<dbReference type="DNASU" id="28028"/>
<dbReference type="Ensembl" id="ENSMUST00000057829.4">
    <property type="protein sequence ID" value="ENSMUSP00000062476.4"/>
    <property type="gene ID" value="ENSMUSG00000044018.4"/>
</dbReference>
<dbReference type="GeneID" id="28028"/>
<dbReference type="KEGG" id="mmu:28028"/>
<dbReference type="UCSC" id="uc008svu.1">
    <property type="organism name" value="mouse"/>
</dbReference>
<dbReference type="AGR" id="MGI:107329"/>
<dbReference type="CTD" id="54534"/>
<dbReference type="MGI" id="MGI:107329">
    <property type="gene designation" value="Mrpl50"/>
</dbReference>
<dbReference type="VEuPathDB" id="HostDB:ENSMUSG00000044018"/>
<dbReference type="eggNOG" id="ENOG502S27V">
    <property type="taxonomic scope" value="Eukaryota"/>
</dbReference>
<dbReference type="GeneTree" id="ENSGT00390000004279"/>
<dbReference type="HOGENOM" id="CLU_137129_0_0_1"/>
<dbReference type="InParanoid" id="Q8VDT9"/>
<dbReference type="OMA" id="LMCSAQD"/>
<dbReference type="OrthoDB" id="9939609at2759"/>
<dbReference type="PhylomeDB" id="Q8VDT9"/>
<dbReference type="TreeFam" id="TF105895"/>
<dbReference type="Reactome" id="R-MMU-5389840">
    <property type="pathway name" value="Mitochondrial translation elongation"/>
</dbReference>
<dbReference type="Reactome" id="R-MMU-5419276">
    <property type="pathway name" value="Mitochondrial translation termination"/>
</dbReference>
<dbReference type="BioGRID-ORCS" id="28028">
    <property type="hits" value="18 hits in 79 CRISPR screens"/>
</dbReference>
<dbReference type="ChiTaRS" id="Mrpl50">
    <property type="organism name" value="mouse"/>
</dbReference>
<dbReference type="PRO" id="PR:Q8VDT9"/>
<dbReference type="Proteomes" id="UP000000589">
    <property type="component" value="Chromosome 4"/>
</dbReference>
<dbReference type="RNAct" id="Q8VDT9">
    <property type="molecule type" value="protein"/>
</dbReference>
<dbReference type="Bgee" id="ENSMUSG00000044018">
    <property type="expression patterns" value="Expressed in heart right ventricle and 266 other cell types or tissues"/>
</dbReference>
<dbReference type="GO" id="GO:0005829">
    <property type="term" value="C:cytosol"/>
    <property type="evidence" value="ECO:0007669"/>
    <property type="project" value="Ensembl"/>
</dbReference>
<dbReference type="GO" id="GO:0005743">
    <property type="term" value="C:mitochondrial inner membrane"/>
    <property type="evidence" value="ECO:0000303"/>
    <property type="project" value="ComplexPortal"/>
</dbReference>
<dbReference type="GO" id="GO:0005762">
    <property type="term" value="C:mitochondrial large ribosomal subunit"/>
    <property type="evidence" value="ECO:0000250"/>
    <property type="project" value="UniProtKB"/>
</dbReference>
<dbReference type="GO" id="GO:0005739">
    <property type="term" value="C:mitochondrion"/>
    <property type="evidence" value="ECO:0007005"/>
    <property type="project" value="MGI"/>
</dbReference>
<dbReference type="GO" id="GO:0032543">
    <property type="term" value="P:mitochondrial translation"/>
    <property type="evidence" value="ECO:0000303"/>
    <property type="project" value="ComplexPortal"/>
</dbReference>
<dbReference type="InterPro" id="IPR018305">
    <property type="entry name" value="Ribosomal_m50"/>
</dbReference>
<dbReference type="PANTHER" id="PTHR31542">
    <property type="entry name" value="39A RIBOSOMAL PROTEIN L50, MITOCHONDRIAL"/>
    <property type="match status" value="1"/>
</dbReference>
<dbReference type="PANTHER" id="PTHR31542:SF1">
    <property type="entry name" value="LARGE RIBOSOMAL SUBUNIT PROTEIN ML50"/>
    <property type="match status" value="1"/>
</dbReference>
<dbReference type="Pfam" id="PF10501">
    <property type="entry name" value="Ribosomal_L50"/>
    <property type="match status" value="1"/>
</dbReference>
<comment type="subunit">
    <text evidence="1">Component of the mitochondrial ribosome large subunit (39S) which comprises a 16S rRNA and about 50 distinct proteins.</text>
</comment>
<comment type="subcellular location">
    <subcellularLocation>
        <location evidence="1">Mitochondrion</location>
    </subcellularLocation>
</comment>
<comment type="similarity">
    <text evidence="2">Belongs to the mitochondrion-specific ribosomal protein mL50 family.</text>
</comment>
<name>RM50_MOUSE</name>
<protein>
    <recommendedName>
        <fullName evidence="2">Large ribosomal subunit protein mL50</fullName>
    </recommendedName>
    <alternativeName>
        <fullName>39S ribosomal protein L50, mitochondrial</fullName>
        <shortName>L50mt</shortName>
        <shortName>MRP-L50</shortName>
    </alternativeName>
</protein>
<gene>
    <name type="primary">Mrpl50</name>
</gene>
<accession>Q8VDT9</accession>
<accession>Q9CR44</accession>
<evidence type="ECO:0000250" key="1">
    <source>
        <dbReference type="UniProtKB" id="Q8N5N7"/>
    </source>
</evidence>
<evidence type="ECO:0000305" key="2"/>